<feature type="chain" id="PRO_0000069348" description="C-X-C chemokine receptor type 3">
    <location>
        <begin position="1"/>
        <end position="367"/>
    </location>
</feature>
<feature type="topological domain" description="Extracellular" evidence="4">
    <location>
        <begin position="1"/>
        <end position="56"/>
    </location>
</feature>
<feature type="transmembrane region" description="Helical; Name=1" evidence="4">
    <location>
        <begin position="57"/>
        <end position="77"/>
    </location>
</feature>
<feature type="topological domain" description="Cytoplasmic" evidence="4">
    <location>
        <begin position="78"/>
        <end position="89"/>
    </location>
</feature>
<feature type="transmembrane region" description="Helical; Name=2" evidence="4">
    <location>
        <begin position="90"/>
        <end position="110"/>
    </location>
</feature>
<feature type="topological domain" description="Extracellular" evidence="4">
    <location>
        <begin position="111"/>
        <end position="125"/>
    </location>
</feature>
<feature type="transmembrane region" description="Helical; Name=3" evidence="4">
    <location>
        <begin position="126"/>
        <end position="146"/>
    </location>
</feature>
<feature type="topological domain" description="Cytoplasmic" evidence="4">
    <location>
        <begin position="147"/>
        <end position="168"/>
    </location>
</feature>
<feature type="transmembrane region" description="Helical; Name=4" evidence="4">
    <location>
        <begin position="169"/>
        <end position="189"/>
    </location>
</feature>
<feature type="topological domain" description="Extracellular" evidence="4">
    <location>
        <begin position="190"/>
        <end position="222"/>
    </location>
</feature>
<feature type="transmembrane region" description="Helical; Name=5" evidence="4">
    <location>
        <begin position="223"/>
        <end position="243"/>
    </location>
</feature>
<feature type="topological domain" description="Cytoplasmic" evidence="4">
    <location>
        <begin position="244"/>
        <end position="255"/>
    </location>
</feature>
<feature type="transmembrane region" description="Helical; Name=6" evidence="4">
    <location>
        <begin position="256"/>
        <end position="276"/>
    </location>
</feature>
<feature type="topological domain" description="Extracellular" evidence="4">
    <location>
        <begin position="277"/>
        <end position="300"/>
    </location>
</feature>
<feature type="transmembrane region" description="Helical; Name=7" evidence="4">
    <location>
        <begin position="301"/>
        <end position="321"/>
    </location>
</feature>
<feature type="topological domain" description="Cytoplasmic" evidence="4">
    <location>
        <begin position="322"/>
        <end position="367"/>
    </location>
</feature>
<feature type="region of interest" description="Disordered" evidence="6">
    <location>
        <begin position="339"/>
        <end position="367"/>
    </location>
</feature>
<feature type="modified residue" description="Sulfotyrosine" evidence="1">
    <location>
        <position position="27"/>
    </location>
</feature>
<feature type="modified residue" description="Sulfotyrosine" evidence="1">
    <location>
        <position position="29"/>
    </location>
</feature>
<feature type="glycosylation site" description="N-linked (GlcNAc...) asparagine" evidence="4">
    <location>
        <position position="22"/>
    </location>
</feature>
<feature type="glycosylation site" description="N-linked (GlcNAc...) asparagine" evidence="4">
    <location>
        <position position="32"/>
    </location>
</feature>
<feature type="glycosylation site" description="N-linked (GlcNAc...) asparagine" evidence="4">
    <location>
        <position position="198"/>
    </location>
</feature>
<feature type="disulfide bond" evidence="5">
    <location>
        <begin position="123"/>
        <end position="202"/>
    </location>
</feature>
<gene>
    <name type="primary">Cxcr3</name>
</gene>
<comment type="function">
    <text evidence="2 3">Receptor for the C-X-C chemokine CXCL9, CXCL10 and CXCL11 and mediates the proliferation, survival and angiogenic activity of mesangial cells through a heterotrimeric G-protein signaling pathway. Probably promotes cell chemotaxis response (By similarity). Binds to CCL21. Upon activation by PF4, induces activated T-lymphocytes migration mediated via downstream Ras/extracellular signal-regulated kinase (ERK) signaling (By similarity).</text>
</comment>
<comment type="subunit">
    <text evidence="3">Homomer. Forms heteromers with ACKR4 (By similarity). Interacts with PF4/CXCL4 (By similarity).</text>
</comment>
<comment type="subcellular location">
    <subcellularLocation>
        <location evidence="1">Cell membrane</location>
        <topology evidence="1">Multi-pass membrane protein</topology>
    </subcellularLocation>
</comment>
<comment type="PTM">
    <text evidence="1">Sulfation on Tyr-27 and Tyr-29 is essential for CXCL10 binding.</text>
</comment>
<comment type="PTM">
    <text evidence="1">N-glycosylated.</text>
</comment>
<comment type="similarity">
    <text evidence="5">Belongs to the G-protein coupled receptor 1 family.</text>
</comment>
<accession>Q9JII9</accession>
<protein>
    <recommendedName>
        <fullName>C-X-C chemokine receptor type 3</fullName>
        <shortName>CXC-R3</shortName>
        <shortName>CXCR-3</shortName>
    </recommendedName>
    <alternativeName>
        <fullName>Interferon-inducible protein 10 receptor</fullName>
        <shortName>IP-10 receptor</shortName>
    </alternativeName>
    <cdAntigenName>CD183</cdAntigenName>
</protein>
<organism>
    <name type="scientific">Rattus norvegicus</name>
    <name type="common">Rat</name>
    <dbReference type="NCBI Taxonomy" id="10116"/>
    <lineage>
        <taxon>Eukaryota</taxon>
        <taxon>Metazoa</taxon>
        <taxon>Chordata</taxon>
        <taxon>Craniata</taxon>
        <taxon>Vertebrata</taxon>
        <taxon>Euteleostomi</taxon>
        <taxon>Mammalia</taxon>
        <taxon>Eutheria</taxon>
        <taxon>Euarchontoglires</taxon>
        <taxon>Glires</taxon>
        <taxon>Rodentia</taxon>
        <taxon>Myomorpha</taxon>
        <taxon>Muroidea</taxon>
        <taxon>Muridae</taxon>
        <taxon>Murinae</taxon>
        <taxon>Rattus</taxon>
    </lineage>
</organism>
<proteinExistence type="evidence at transcript level"/>
<evidence type="ECO:0000250" key="1"/>
<evidence type="ECO:0000250" key="2">
    <source>
        <dbReference type="UniProtKB" id="O88410"/>
    </source>
</evidence>
<evidence type="ECO:0000250" key="3">
    <source>
        <dbReference type="UniProtKB" id="P49682"/>
    </source>
</evidence>
<evidence type="ECO:0000255" key="4"/>
<evidence type="ECO:0000255" key="5">
    <source>
        <dbReference type="PROSITE-ProRule" id="PRU00521"/>
    </source>
</evidence>
<evidence type="ECO:0000256" key="6">
    <source>
        <dbReference type="SAM" id="MobiDB-lite"/>
    </source>
</evidence>
<keyword id="KW-0037">Angiogenesis</keyword>
<keyword id="KW-1003">Cell membrane</keyword>
<keyword id="KW-0145">Chemotaxis</keyword>
<keyword id="KW-1015">Disulfide bond</keyword>
<keyword id="KW-0297">G-protein coupled receptor</keyword>
<keyword id="KW-0325">Glycoprotein</keyword>
<keyword id="KW-0472">Membrane</keyword>
<keyword id="KW-0675">Receptor</keyword>
<keyword id="KW-1185">Reference proteome</keyword>
<keyword id="KW-0765">Sulfation</keyword>
<keyword id="KW-0807">Transducer</keyword>
<keyword id="KW-0812">Transmembrane</keyword>
<keyword id="KW-1133">Transmembrane helix</keyword>
<dbReference type="EMBL" id="AF223642">
    <property type="protein sequence ID" value="AAF76982.1"/>
    <property type="molecule type" value="mRNA"/>
</dbReference>
<dbReference type="EMBL" id="BC091136">
    <property type="protein sequence ID" value="AAH91136.1"/>
    <property type="molecule type" value="mRNA"/>
</dbReference>
<dbReference type="RefSeq" id="NP_445867.1">
    <property type="nucleotide sequence ID" value="NM_053415.1"/>
</dbReference>
<dbReference type="SMR" id="Q9JII9"/>
<dbReference type="FunCoup" id="Q9JII9">
    <property type="interactions" value="144"/>
</dbReference>
<dbReference type="STRING" id="10116.ENSRNOP00000004406"/>
<dbReference type="BindingDB" id="Q9JII9"/>
<dbReference type="ChEMBL" id="CHEMBL1075172"/>
<dbReference type="GlyCosmos" id="Q9JII9">
    <property type="glycosylation" value="3 sites, No reported glycans"/>
</dbReference>
<dbReference type="GlyGen" id="Q9JII9">
    <property type="glycosylation" value="3 sites"/>
</dbReference>
<dbReference type="PhosphoSitePlus" id="Q9JII9"/>
<dbReference type="PaxDb" id="10116-ENSRNOP00000004406"/>
<dbReference type="Ensembl" id="ENSRNOT00000004406.6">
    <property type="protein sequence ID" value="ENSRNOP00000004406.3"/>
    <property type="gene ID" value="ENSRNOG00000003305.7"/>
</dbReference>
<dbReference type="GeneID" id="84475"/>
<dbReference type="KEGG" id="rno:84475"/>
<dbReference type="UCSC" id="RGD:621528">
    <property type="organism name" value="rat"/>
</dbReference>
<dbReference type="AGR" id="RGD:621528"/>
<dbReference type="CTD" id="2833"/>
<dbReference type="RGD" id="621528">
    <property type="gene designation" value="Cxcr3"/>
</dbReference>
<dbReference type="eggNOG" id="KOG3656">
    <property type="taxonomic scope" value="Eukaryota"/>
</dbReference>
<dbReference type="GeneTree" id="ENSGT01050000244848"/>
<dbReference type="HOGENOM" id="CLU_009579_8_3_1"/>
<dbReference type="InParanoid" id="Q9JII9"/>
<dbReference type="OrthoDB" id="80750at9989"/>
<dbReference type="PhylomeDB" id="Q9JII9"/>
<dbReference type="TreeFam" id="TF330966"/>
<dbReference type="Reactome" id="R-RNO-380108">
    <property type="pathway name" value="Chemokine receptors bind chemokines"/>
</dbReference>
<dbReference type="Reactome" id="R-RNO-418594">
    <property type="pathway name" value="G alpha (i) signalling events"/>
</dbReference>
<dbReference type="PRO" id="PR:Q9JII9"/>
<dbReference type="Proteomes" id="UP000002494">
    <property type="component" value="Chromosome X"/>
</dbReference>
<dbReference type="Bgee" id="ENSRNOG00000003305">
    <property type="expression patterns" value="Expressed in spleen and 13 other cell types or tissues"/>
</dbReference>
<dbReference type="ExpressionAtlas" id="Q9JII9">
    <property type="expression patterns" value="baseline and differential"/>
</dbReference>
<dbReference type="GO" id="GO:0009986">
    <property type="term" value="C:cell surface"/>
    <property type="evidence" value="ECO:0000266"/>
    <property type="project" value="RGD"/>
</dbReference>
<dbReference type="GO" id="GO:0009897">
    <property type="term" value="C:external side of plasma membrane"/>
    <property type="evidence" value="ECO:0000314"/>
    <property type="project" value="RGD"/>
</dbReference>
<dbReference type="GO" id="GO:0005886">
    <property type="term" value="C:plasma membrane"/>
    <property type="evidence" value="ECO:0000266"/>
    <property type="project" value="RGD"/>
</dbReference>
<dbReference type="GO" id="GO:0019957">
    <property type="term" value="F:C-C chemokine binding"/>
    <property type="evidence" value="ECO:0000318"/>
    <property type="project" value="GO_Central"/>
</dbReference>
<dbReference type="GO" id="GO:0016493">
    <property type="term" value="F:C-C chemokine receptor activity"/>
    <property type="evidence" value="ECO:0000318"/>
    <property type="project" value="GO_Central"/>
</dbReference>
<dbReference type="GO" id="GO:0019958">
    <property type="term" value="F:C-X-C chemokine binding"/>
    <property type="evidence" value="ECO:0000250"/>
    <property type="project" value="UniProtKB"/>
</dbReference>
<dbReference type="GO" id="GO:0016494">
    <property type="term" value="F:C-X-C chemokine receptor activity"/>
    <property type="evidence" value="ECO:0000353"/>
    <property type="project" value="RGD"/>
</dbReference>
<dbReference type="GO" id="GO:0019956">
    <property type="term" value="F:chemokine binding"/>
    <property type="evidence" value="ECO:0000266"/>
    <property type="project" value="RGD"/>
</dbReference>
<dbReference type="GO" id="GO:0038023">
    <property type="term" value="F:signaling receptor activity"/>
    <property type="evidence" value="ECO:0000250"/>
    <property type="project" value="UniProtKB"/>
</dbReference>
<dbReference type="GO" id="GO:0001525">
    <property type="term" value="P:angiogenesis"/>
    <property type="evidence" value="ECO:0007669"/>
    <property type="project" value="UniProtKB-KW"/>
</dbReference>
<dbReference type="GO" id="GO:0019722">
    <property type="term" value="P:calcium-mediated signaling"/>
    <property type="evidence" value="ECO:0000314"/>
    <property type="project" value="RGD"/>
</dbReference>
<dbReference type="GO" id="GO:0060326">
    <property type="term" value="P:cell chemotaxis"/>
    <property type="evidence" value="ECO:0000318"/>
    <property type="project" value="GO_Central"/>
</dbReference>
<dbReference type="GO" id="GO:0007166">
    <property type="term" value="P:cell surface receptor signaling pathway"/>
    <property type="evidence" value="ECO:0000266"/>
    <property type="project" value="RGD"/>
</dbReference>
<dbReference type="GO" id="GO:0007186">
    <property type="term" value="P:G protein-coupled receptor signaling pathway"/>
    <property type="evidence" value="ECO:0000250"/>
    <property type="project" value="UniProtKB"/>
</dbReference>
<dbReference type="GO" id="GO:0006955">
    <property type="term" value="P:immune response"/>
    <property type="evidence" value="ECO:0000318"/>
    <property type="project" value="GO_Central"/>
</dbReference>
<dbReference type="GO" id="GO:0006954">
    <property type="term" value="P:inflammatory response"/>
    <property type="evidence" value="ECO:0007669"/>
    <property type="project" value="InterPro"/>
</dbReference>
<dbReference type="GO" id="GO:1900118">
    <property type="term" value="P:negative regulation of execution phase of apoptosis"/>
    <property type="evidence" value="ECO:0000250"/>
    <property type="project" value="UniProtKB"/>
</dbReference>
<dbReference type="GO" id="GO:0045766">
    <property type="term" value="P:positive regulation of angiogenesis"/>
    <property type="evidence" value="ECO:0000250"/>
    <property type="project" value="UniProtKB"/>
</dbReference>
<dbReference type="GO" id="GO:0008284">
    <property type="term" value="P:positive regulation of cell population proliferation"/>
    <property type="evidence" value="ECO:0000250"/>
    <property type="project" value="UniProtKB"/>
</dbReference>
<dbReference type="GO" id="GO:0050921">
    <property type="term" value="P:positive regulation of chemotaxis"/>
    <property type="evidence" value="ECO:0000250"/>
    <property type="project" value="UniProtKB"/>
</dbReference>
<dbReference type="GO" id="GO:0007204">
    <property type="term" value="P:positive regulation of cytosolic calcium ion concentration"/>
    <property type="evidence" value="ECO:0000314"/>
    <property type="project" value="RGD"/>
</dbReference>
<dbReference type="GO" id="GO:0051281">
    <property type="term" value="P:positive regulation of release of sequestered calcium ion into cytosol"/>
    <property type="evidence" value="ECO:0000250"/>
    <property type="project" value="UniProtKB"/>
</dbReference>
<dbReference type="GO" id="GO:0030155">
    <property type="term" value="P:regulation of cell adhesion"/>
    <property type="evidence" value="ECO:0000266"/>
    <property type="project" value="RGD"/>
</dbReference>
<dbReference type="GO" id="GO:0002685">
    <property type="term" value="P:regulation of leukocyte migration"/>
    <property type="evidence" value="ECO:0007669"/>
    <property type="project" value="InterPro"/>
</dbReference>
<dbReference type="GO" id="GO:0010818">
    <property type="term" value="P:T cell chemotaxis"/>
    <property type="evidence" value="ECO:0000315"/>
    <property type="project" value="RGD"/>
</dbReference>
<dbReference type="CDD" id="cd15180">
    <property type="entry name" value="7tmA_CXCR3"/>
    <property type="match status" value="1"/>
</dbReference>
<dbReference type="FunFam" id="1.20.1070.10:FF:000159">
    <property type="entry name" value="C-X-C chemokine receptor type 3"/>
    <property type="match status" value="1"/>
</dbReference>
<dbReference type="Gene3D" id="1.20.1070.10">
    <property type="entry name" value="Rhodopsin 7-helix transmembrane proteins"/>
    <property type="match status" value="1"/>
</dbReference>
<dbReference type="InterPro" id="IPR050119">
    <property type="entry name" value="CCR1-9-like"/>
</dbReference>
<dbReference type="InterPro" id="IPR004070">
    <property type="entry name" value="Chemokine_CXCR3"/>
</dbReference>
<dbReference type="InterPro" id="IPR000355">
    <property type="entry name" value="Chemokine_rcpt"/>
</dbReference>
<dbReference type="InterPro" id="IPR000276">
    <property type="entry name" value="GPCR_Rhodpsn"/>
</dbReference>
<dbReference type="InterPro" id="IPR017452">
    <property type="entry name" value="GPCR_Rhodpsn_7TM"/>
</dbReference>
<dbReference type="PANTHER" id="PTHR10489:SF671">
    <property type="entry name" value="C-X-C CHEMOKINE RECEPTOR TYPE 3"/>
    <property type="match status" value="1"/>
</dbReference>
<dbReference type="PANTHER" id="PTHR10489">
    <property type="entry name" value="CELL ADHESION MOLECULE"/>
    <property type="match status" value="1"/>
</dbReference>
<dbReference type="Pfam" id="PF00001">
    <property type="entry name" value="7tm_1"/>
    <property type="match status" value="1"/>
</dbReference>
<dbReference type="PRINTS" id="PR00657">
    <property type="entry name" value="CCCHEMOKINER"/>
</dbReference>
<dbReference type="PRINTS" id="PR01532">
    <property type="entry name" value="CXCCHMKINER3"/>
</dbReference>
<dbReference type="PRINTS" id="PR00237">
    <property type="entry name" value="GPCRRHODOPSN"/>
</dbReference>
<dbReference type="SUPFAM" id="SSF81321">
    <property type="entry name" value="Family A G protein-coupled receptor-like"/>
    <property type="match status" value="1"/>
</dbReference>
<dbReference type="PROSITE" id="PS00237">
    <property type="entry name" value="G_PROTEIN_RECEP_F1_1"/>
    <property type="match status" value="1"/>
</dbReference>
<dbReference type="PROSITE" id="PS50262">
    <property type="entry name" value="G_PROTEIN_RECEP_F1_2"/>
    <property type="match status" value="1"/>
</dbReference>
<sequence length="367" mass="40935">MYLEVSERQVLDASDIAFLLENSTSPYDYGENESDFSDSPPCPQDFSLNFDRTFLPVLYSLLFLLGLLGNGAVAAVLLSQRTALSSTDTFLLHLAVADVLLVLTLPLWAVDAAAQWVFGSGLCKVAGALFNINFYAGAFLLACISFDRYLSIVHATQIYRRDPWVRVALTCIVVWGLCVLFALPDFIFLSASHDQRLNATHCQYNFPQVGRTALRVLQLVAGFLMPLLVMAYCYAHILAVLLVSRGQRRFRAMRLVVVVVVAFAVCWTPYHLVVLVDILMDVGVLARNCGRESHVDVAKSVTSGMGYMHCCLNPLLYAFVGVKFKEQMWMLLMRLGRSDQRGPQRQPSSSRRESSWSETTEASYLGL</sequence>
<name>CXCR3_RAT</name>
<reference key="1">
    <citation type="journal article" date="2000" name="Mol. Pharmacol.">
        <title>Identification and molecular characterization of rat CXCR3: receptor expression and interferon-inducible protein-10 binding are increased in focal stroke.</title>
        <authorList>
            <person name="Wang X."/>
            <person name="Li X."/>
            <person name="Schmidt D.B."/>
            <person name="Foley J.J."/>
            <person name="Barone F.C."/>
            <person name="Ames R.S."/>
            <person name="Sarau H.M."/>
        </authorList>
    </citation>
    <scope>NUCLEOTIDE SEQUENCE [MRNA]</scope>
</reference>
<reference key="2">
    <citation type="journal article" date="2004" name="Genome Res.">
        <title>The status, quality, and expansion of the NIH full-length cDNA project: the Mammalian Gene Collection (MGC).</title>
        <authorList>
            <consortium name="The MGC Project Team"/>
        </authorList>
    </citation>
    <scope>NUCLEOTIDE SEQUENCE [LARGE SCALE MRNA]</scope>
    <source>
        <tissue>Spleen</tissue>
    </source>
</reference>